<evidence type="ECO:0000255" key="1">
    <source>
        <dbReference type="HAMAP-Rule" id="MF_00362"/>
    </source>
</evidence>
<evidence type="ECO:0000305" key="2"/>
<gene>
    <name evidence="1" type="primary">rplJ</name>
    <name type="ordered locus">XOO3396</name>
</gene>
<feature type="chain" id="PRO_0000234909" description="Large ribosomal subunit protein uL10">
    <location>
        <begin position="1"/>
        <end position="177"/>
    </location>
</feature>
<proteinExistence type="inferred from homology"/>
<comment type="function">
    <text evidence="1">Forms part of the ribosomal stalk, playing a central role in the interaction of the ribosome with GTP-bound translation factors.</text>
</comment>
<comment type="subunit">
    <text evidence="1">Part of the ribosomal stalk of the 50S ribosomal subunit. The N-terminus interacts with L11 and the large rRNA to form the base of the stalk. The C-terminus forms an elongated spine to which L12 dimers bind in a sequential fashion forming a multimeric L10(L12)X complex.</text>
</comment>
<comment type="similarity">
    <text evidence="1">Belongs to the universal ribosomal protein uL10 family.</text>
</comment>
<reference key="1">
    <citation type="journal article" date="2005" name="Jpn. Agric. Res. Q.">
        <title>Genome sequence of Xanthomonas oryzae pv. oryzae suggests contribution of large numbers of effector genes and insertion sequences to its race diversity.</title>
        <authorList>
            <person name="Ochiai H."/>
            <person name="Inoue Y."/>
            <person name="Takeya M."/>
            <person name="Sasaki A."/>
            <person name="Kaku H."/>
        </authorList>
    </citation>
    <scope>NUCLEOTIDE SEQUENCE [LARGE SCALE GENOMIC DNA]</scope>
    <source>
        <strain>MAFF 311018</strain>
    </source>
</reference>
<keyword id="KW-0687">Ribonucleoprotein</keyword>
<keyword id="KW-0689">Ribosomal protein</keyword>
<keyword id="KW-0694">RNA-binding</keyword>
<keyword id="KW-0699">rRNA-binding</keyword>
<accession>Q2NZX6</accession>
<dbReference type="EMBL" id="AP008229">
    <property type="protein sequence ID" value="BAE70151.1"/>
    <property type="molecule type" value="Genomic_DNA"/>
</dbReference>
<dbReference type="RefSeq" id="WP_011260036.1">
    <property type="nucleotide sequence ID" value="NC_007705.1"/>
</dbReference>
<dbReference type="SMR" id="Q2NZX6"/>
<dbReference type="KEGG" id="xom:XOO3396"/>
<dbReference type="HOGENOM" id="CLU_092227_0_1_6"/>
<dbReference type="GO" id="GO:1990904">
    <property type="term" value="C:ribonucleoprotein complex"/>
    <property type="evidence" value="ECO:0007669"/>
    <property type="project" value="UniProtKB-KW"/>
</dbReference>
<dbReference type="GO" id="GO:0005840">
    <property type="term" value="C:ribosome"/>
    <property type="evidence" value="ECO:0007669"/>
    <property type="project" value="UniProtKB-KW"/>
</dbReference>
<dbReference type="GO" id="GO:0070180">
    <property type="term" value="F:large ribosomal subunit rRNA binding"/>
    <property type="evidence" value="ECO:0007669"/>
    <property type="project" value="UniProtKB-UniRule"/>
</dbReference>
<dbReference type="GO" id="GO:0006412">
    <property type="term" value="P:translation"/>
    <property type="evidence" value="ECO:0007669"/>
    <property type="project" value="UniProtKB-UniRule"/>
</dbReference>
<dbReference type="CDD" id="cd05797">
    <property type="entry name" value="Ribosomal_L10"/>
    <property type="match status" value="1"/>
</dbReference>
<dbReference type="FunFam" id="3.30.70.1730:FF:000001">
    <property type="entry name" value="50S ribosomal protein L10"/>
    <property type="match status" value="1"/>
</dbReference>
<dbReference type="Gene3D" id="3.30.70.1730">
    <property type="match status" value="1"/>
</dbReference>
<dbReference type="HAMAP" id="MF_00362">
    <property type="entry name" value="Ribosomal_uL10"/>
    <property type="match status" value="1"/>
</dbReference>
<dbReference type="InterPro" id="IPR001790">
    <property type="entry name" value="Ribosomal_uL10"/>
</dbReference>
<dbReference type="InterPro" id="IPR043141">
    <property type="entry name" value="Ribosomal_uL10-like_sf"/>
</dbReference>
<dbReference type="InterPro" id="IPR022973">
    <property type="entry name" value="Ribosomal_uL10_bac"/>
</dbReference>
<dbReference type="InterPro" id="IPR047865">
    <property type="entry name" value="Ribosomal_uL10_bac_type"/>
</dbReference>
<dbReference type="NCBIfam" id="NF000955">
    <property type="entry name" value="PRK00099.1-1"/>
    <property type="match status" value="1"/>
</dbReference>
<dbReference type="PANTHER" id="PTHR11560">
    <property type="entry name" value="39S RIBOSOMAL PROTEIN L10, MITOCHONDRIAL"/>
    <property type="match status" value="1"/>
</dbReference>
<dbReference type="Pfam" id="PF00466">
    <property type="entry name" value="Ribosomal_L10"/>
    <property type="match status" value="1"/>
</dbReference>
<dbReference type="SUPFAM" id="SSF160369">
    <property type="entry name" value="Ribosomal protein L10-like"/>
    <property type="match status" value="1"/>
</dbReference>
<protein>
    <recommendedName>
        <fullName evidence="1">Large ribosomal subunit protein uL10</fullName>
    </recommendedName>
    <alternativeName>
        <fullName evidence="2">50S ribosomal protein L10</fullName>
    </alternativeName>
</protein>
<name>RL10_XANOM</name>
<organism>
    <name type="scientific">Xanthomonas oryzae pv. oryzae (strain MAFF 311018)</name>
    <dbReference type="NCBI Taxonomy" id="342109"/>
    <lineage>
        <taxon>Bacteria</taxon>
        <taxon>Pseudomonadati</taxon>
        <taxon>Pseudomonadota</taxon>
        <taxon>Gammaproteobacteria</taxon>
        <taxon>Lysobacterales</taxon>
        <taxon>Lysobacteraceae</taxon>
        <taxon>Xanthomonas</taxon>
    </lineage>
</organism>
<sequence length="177" mass="18253">MALNLSQKQEVVAELADVAAKAHSLIAAEYAGTTVSQMTAMRKQARETGVFLKVVKNTLAARAVEGTDFAVAADKLVGPLLYAFSMEEPGAAGRLIKEFAKSNDKLQAKVVSIGGELFPAGHVDVLASLPTRDQALAMLARVLSEPAAMFARAVKAVGDKQGGGDAAAAAVAETAEA</sequence>